<feature type="signal peptide" evidence="6">
    <location>
        <begin position="1"/>
        <end position="17"/>
    </location>
</feature>
<feature type="chain" id="PRO_0000024021" description="Alkaline phosphatase, tissue-nonspecific isozyme">
    <location>
        <begin position="18"/>
        <end position="499"/>
    </location>
</feature>
<feature type="propeptide" id="PRO_0000024022" description="Removed in mature form" evidence="4">
    <location>
        <begin position="500"/>
        <end position="524"/>
    </location>
</feature>
<feature type="active site" description="Phosphoserine intermediate" evidence="2 5">
    <location>
        <position position="110"/>
    </location>
</feature>
<feature type="binding site" evidence="2">
    <location>
        <position position="60"/>
    </location>
    <ligand>
        <name>Mg(2+)</name>
        <dbReference type="ChEBI" id="CHEBI:18420"/>
    </ligand>
</feature>
<feature type="binding site" evidence="2">
    <location>
        <position position="60"/>
    </location>
    <ligand>
        <name>Zn(2+)</name>
        <dbReference type="ChEBI" id="CHEBI:29105"/>
        <label>1</label>
    </ligand>
</feature>
<feature type="binding site" evidence="2">
    <location>
        <position position="110"/>
    </location>
    <ligand>
        <name>Zn(2+)</name>
        <dbReference type="ChEBI" id="CHEBI:29105"/>
        <label>1</label>
    </ligand>
</feature>
<feature type="binding site" evidence="2">
    <location>
        <position position="173"/>
    </location>
    <ligand>
        <name>Mg(2+)</name>
        <dbReference type="ChEBI" id="CHEBI:18420"/>
    </ligand>
</feature>
<feature type="binding site" evidence="1">
    <location>
        <position position="235"/>
    </location>
    <ligand>
        <name>Ca(2+)</name>
        <dbReference type="ChEBI" id="CHEBI:29108"/>
    </ligand>
</feature>
<feature type="binding site" evidence="1">
    <location>
        <position position="290"/>
    </location>
    <ligand>
        <name>Ca(2+)</name>
        <dbReference type="ChEBI" id="CHEBI:29108"/>
    </ligand>
</feature>
<feature type="binding site" evidence="1">
    <location>
        <position position="291"/>
    </location>
    <ligand>
        <name>Ca(2+)</name>
        <dbReference type="ChEBI" id="CHEBI:29108"/>
    </ligand>
</feature>
<feature type="binding site" evidence="1">
    <location>
        <position position="306"/>
    </location>
    <ligand>
        <name>Ca(2+)</name>
        <dbReference type="ChEBI" id="CHEBI:29108"/>
    </ligand>
</feature>
<feature type="binding site" evidence="2">
    <location>
        <position position="332"/>
    </location>
    <ligand>
        <name>Mg(2+)</name>
        <dbReference type="ChEBI" id="CHEBI:18420"/>
    </ligand>
</feature>
<feature type="binding site" evidence="2">
    <location>
        <position position="337"/>
    </location>
    <ligand>
        <name>Zn(2+)</name>
        <dbReference type="ChEBI" id="CHEBI:29105"/>
        <label>2</label>
    </ligand>
</feature>
<feature type="binding site" evidence="2">
    <location>
        <position position="341"/>
    </location>
    <ligand>
        <name>Zn(2+)</name>
        <dbReference type="ChEBI" id="CHEBI:29105"/>
        <label>2</label>
    </ligand>
</feature>
<feature type="binding site" evidence="2">
    <location>
        <position position="378"/>
    </location>
    <ligand>
        <name>Zn(2+)</name>
        <dbReference type="ChEBI" id="CHEBI:29105"/>
        <label>1</label>
    </ligand>
</feature>
<feature type="binding site" evidence="2">
    <location>
        <position position="379"/>
    </location>
    <ligand>
        <name>Zn(2+)</name>
        <dbReference type="ChEBI" id="CHEBI:29105"/>
        <label>1</label>
    </ligand>
</feature>
<feature type="binding site" evidence="2">
    <location>
        <position position="454"/>
    </location>
    <ligand>
        <name>Zn(2+)</name>
        <dbReference type="ChEBI" id="CHEBI:29105"/>
        <label>2</label>
    </ligand>
</feature>
<feature type="modified residue" description="Phosphoserine" evidence="3">
    <location>
        <position position="110"/>
    </location>
</feature>
<feature type="lipid moiety-binding region" description="GPI-anchor amidated serine" evidence="4">
    <location>
        <position position="499"/>
    </location>
</feature>
<feature type="glycosylation site" description="N-linked (GlcNAc...) asparagine" evidence="4">
    <location>
        <position position="140"/>
    </location>
</feature>
<feature type="glycosylation site" description="N-linked (GlcNAc...) asparagine" evidence="4">
    <location>
        <position position="230"/>
    </location>
</feature>
<feature type="glycosylation site" description="N-linked (GlcNAc...) asparagine" evidence="4">
    <location>
        <position position="271"/>
    </location>
</feature>
<feature type="glycosylation site" description="N-linked (GlcNAc...) asparagine" evidence="4">
    <location>
        <position position="302"/>
    </location>
</feature>
<feature type="glycosylation site" description="N-linked (GlcNAc...) asparagine" evidence="4">
    <location>
        <position position="430"/>
    </location>
</feature>
<feature type="disulfide bond" evidence="2">
    <location>
        <begin position="139"/>
        <end position="201"/>
    </location>
</feature>
<feature type="disulfide bond" evidence="2">
    <location>
        <begin position="489"/>
        <end position="497"/>
    </location>
</feature>
<protein>
    <recommendedName>
        <fullName evidence="7">Alkaline phosphatase, tissue-nonspecific isozyme</fullName>
        <shortName>AP-TNAP</shortName>
        <shortName>TNSALP</shortName>
        <ecNumber evidence="6">3.1.3.1</ecNumber>
    </recommendedName>
    <alternativeName>
        <fullName>Alkaline phosphatase liver/bone/kidney isozyme</fullName>
    </alternativeName>
    <alternativeName>
        <fullName evidence="8">Phosphoamidase</fullName>
    </alternativeName>
    <alternativeName>
        <fullName evidence="3">Phosphocreatine phosphatase</fullName>
        <ecNumber evidence="3">3.9.1.1</ecNumber>
    </alternativeName>
</protein>
<name>PPBT_FELCA</name>
<organism>
    <name type="scientific">Felis catus</name>
    <name type="common">Cat</name>
    <name type="synonym">Felis silvestris catus</name>
    <dbReference type="NCBI Taxonomy" id="9685"/>
    <lineage>
        <taxon>Eukaryota</taxon>
        <taxon>Metazoa</taxon>
        <taxon>Chordata</taxon>
        <taxon>Craniata</taxon>
        <taxon>Vertebrata</taxon>
        <taxon>Euteleostomi</taxon>
        <taxon>Mammalia</taxon>
        <taxon>Eutheria</taxon>
        <taxon>Laurasiatheria</taxon>
        <taxon>Carnivora</taxon>
        <taxon>Feliformia</taxon>
        <taxon>Felidae</taxon>
        <taxon>Felinae</taxon>
        <taxon>Felis</taxon>
    </lineage>
</organism>
<evidence type="ECO:0000250" key="1">
    <source>
        <dbReference type="UniProtKB" id="P05186"/>
    </source>
</evidence>
<evidence type="ECO:0000250" key="2">
    <source>
        <dbReference type="UniProtKB" id="P05187"/>
    </source>
</evidence>
<evidence type="ECO:0000250" key="3">
    <source>
        <dbReference type="UniProtKB" id="P09242"/>
    </source>
</evidence>
<evidence type="ECO:0000255" key="4"/>
<evidence type="ECO:0000255" key="5">
    <source>
        <dbReference type="PROSITE-ProRule" id="PRU10042"/>
    </source>
</evidence>
<evidence type="ECO:0000269" key="6">
    <source>
    </source>
</evidence>
<evidence type="ECO:0000303" key="7">
    <source>
    </source>
</evidence>
<evidence type="ECO:0000305" key="8"/>
<comment type="function">
    <text evidence="1 3">Alkaline phosphatase that metabolizes various phosphate compounds and plays a key role in skeletal mineralization and adaptive thermogenesis. Has broad substrate specificity and can hydrolyze a considerable variety of compounds: however, only a few substrates, such as diphosphate (inorganic pyrophosphate; PPi), pyridoxal 5'-phosphate (PLP) and N-phosphocreatine are natural substrates. Plays an essential role in skeletal and dental mineralization via its ability to hydrolyze extracellular diphosphate, a potent mineralization inhibitor, to phosphate: it thereby promotes hydroxyapatite crystal formation and increases inorganic phosphate concentration. Acts in a non-redundant manner with PHOSPHO1 in skeletal mineralization: while PHOSPHO1 mediates the initiation of hydroxyapatite crystallization in the matrix vesicles (MVs), ALPL/TNAP catalyzes the spread of hydroxyapatite crystallization in the extracellular matrix. Also promotes dephosphorylation of osteopontin (SSP1), an inhibitor of hydroxyapatite crystallization in its phosphorylated state; it is however unclear whether ALPL/TNAP mediates SSP1 dephosphorylation via a direct or indirect manner. Catalyzes dephosphorylation of PLP to pyridoxal (PL), the transportable form of vitamin B6, in order to provide a sufficient amount of PLP in the brain, an essential cofactor for enzymes catalyzing the synthesis of diverse neurotransmitters. Additionally, also able to mediate ATP degradation in a stepwise manner to adenosine, thereby regulating the availability of ligands for purinergic receptors (By similarity). Also capable of dephosphorylating microbial products, such as lipopolysaccharides (LPS) as well as other phosphorylated small-molecules, such as poly-inosine:cytosine (poly I:C) (By similarity). Acts as a key regulator of adaptive thermogenesis as part of the futile creatine cycle: localizes to the mitochondria of thermogenic fat cells and acts by mediating hydrolysis of N-phosphocreatine to initiate a futile cycle of creatine dephosphorylation and phosphorylation. During the futile creatine cycle, creatine and N-phosphocreatine are in a futile cycle, which dissipates the high energy charge of N-phosphocreatine as heat without performing any mechanical or chemical work (By similarity).</text>
</comment>
<comment type="catalytic activity">
    <reaction evidence="5 6">
        <text>a phosphate monoester + H2O = an alcohol + phosphate</text>
        <dbReference type="Rhea" id="RHEA:15017"/>
        <dbReference type="ChEBI" id="CHEBI:15377"/>
        <dbReference type="ChEBI" id="CHEBI:30879"/>
        <dbReference type="ChEBI" id="CHEBI:43474"/>
        <dbReference type="ChEBI" id="CHEBI:67140"/>
        <dbReference type="EC" id="3.1.3.1"/>
    </reaction>
    <physiologicalReaction direction="left-to-right" evidence="6">
        <dbReference type="Rhea" id="RHEA:15018"/>
    </physiologicalReaction>
</comment>
<comment type="catalytic activity">
    <reaction evidence="3">
        <text>diphosphate + H2O = 2 phosphate + H(+)</text>
        <dbReference type="Rhea" id="RHEA:24576"/>
        <dbReference type="ChEBI" id="CHEBI:15377"/>
        <dbReference type="ChEBI" id="CHEBI:15378"/>
        <dbReference type="ChEBI" id="CHEBI:33019"/>
        <dbReference type="ChEBI" id="CHEBI:43474"/>
    </reaction>
    <physiologicalReaction direction="left-to-right" evidence="3">
        <dbReference type="Rhea" id="RHEA:24577"/>
    </physiologicalReaction>
</comment>
<comment type="catalytic activity">
    <reaction evidence="1">
        <text>pyridoxal 5'-phosphate + H2O = pyridoxal + phosphate</text>
        <dbReference type="Rhea" id="RHEA:20533"/>
        <dbReference type="ChEBI" id="CHEBI:15377"/>
        <dbReference type="ChEBI" id="CHEBI:17310"/>
        <dbReference type="ChEBI" id="CHEBI:43474"/>
        <dbReference type="ChEBI" id="CHEBI:597326"/>
    </reaction>
    <physiologicalReaction direction="left-to-right" evidence="1">
        <dbReference type="Rhea" id="RHEA:20534"/>
    </physiologicalReaction>
</comment>
<comment type="catalytic activity">
    <reaction evidence="1">
        <text>phosphoethanolamine + H2O = ethanolamine + phosphate</text>
        <dbReference type="Rhea" id="RHEA:16089"/>
        <dbReference type="ChEBI" id="CHEBI:15377"/>
        <dbReference type="ChEBI" id="CHEBI:43474"/>
        <dbReference type="ChEBI" id="CHEBI:57603"/>
        <dbReference type="ChEBI" id="CHEBI:58190"/>
    </reaction>
    <physiologicalReaction direction="left-to-right" evidence="1">
        <dbReference type="Rhea" id="RHEA:16090"/>
    </physiologicalReaction>
</comment>
<comment type="catalytic activity">
    <reaction evidence="3">
        <text>N-phosphocreatine + H2O = creatine + phosphate</text>
        <dbReference type="Rhea" id="RHEA:12977"/>
        <dbReference type="ChEBI" id="CHEBI:15377"/>
        <dbReference type="ChEBI" id="CHEBI:43474"/>
        <dbReference type="ChEBI" id="CHEBI:57947"/>
        <dbReference type="ChEBI" id="CHEBI:58092"/>
        <dbReference type="EC" id="3.9.1.1"/>
    </reaction>
    <physiologicalReaction direction="left-to-right" evidence="3">
        <dbReference type="Rhea" id="RHEA:12978"/>
    </physiologicalReaction>
</comment>
<comment type="catalytic activity">
    <reaction evidence="3">
        <text>ATP + H2O = ADP + phosphate + H(+)</text>
        <dbReference type="Rhea" id="RHEA:13065"/>
        <dbReference type="ChEBI" id="CHEBI:15377"/>
        <dbReference type="ChEBI" id="CHEBI:15378"/>
        <dbReference type="ChEBI" id="CHEBI:30616"/>
        <dbReference type="ChEBI" id="CHEBI:43474"/>
        <dbReference type="ChEBI" id="CHEBI:456216"/>
    </reaction>
    <physiologicalReaction direction="left-to-right" evidence="3">
        <dbReference type="Rhea" id="RHEA:13066"/>
    </physiologicalReaction>
</comment>
<comment type="catalytic activity">
    <reaction evidence="3">
        <text>ADP + H2O = AMP + phosphate + H(+)</text>
        <dbReference type="Rhea" id="RHEA:61436"/>
        <dbReference type="ChEBI" id="CHEBI:15377"/>
        <dbReference type="ChEBI" id="CHEBI:15378"/>
        <dbReference type="ChEBI" id="CHEBI:43474"/>
        <dbReference type="ChEBI" id="CHEBI:456215"/>
        <dbReference type="ChEBI" id="CHEBI:456216"/>
    </reaction>
    <physiologicalReaction direction="left-to-right" evidence="3">
        <dbReference type="Rhea" id="RHEA:61437"/>
    </physiologicalReaction>
</comment>
<comment type="catalytic activity">
    <reaction evidence="3">
        <text>AMP + H2O = adenosine + phosphate</text>
        <dbReference type="Rhea" id="RHEA:29375"/>
        <dbReference type="ChEBI" id="CHEBI:15377"/>
        <dbReference type="ChEBI" id="CHEBI:16335"/>
        <dbReference type="ChEBI" id="CHEBI:43474"/>
        <dbReference type="ChEBI" id="CHEBI:456215"/>
    </reaction>
    <physiologicalReaction direction="left-to-right" evidence="3">
        <dbReference type="Rhea" id="RHEA:29376"/>
    </physiologicalReaction>
</comment>
<comment type="cofactor">
    <cofactor evidence="2">
        <name>Mg(2+)</name>
        <dbReference type="ChEBI" id="CHEBI:18420"/>
    </cofactor>
    <text evidence="2">Binds 1 Mg(2+) ion.</text>
</comment>
<comment type="cofactor">
    <cofactor evidence="2">
        <name>Zn(2+)</name>
        <dbReference type="ChEBI" id="CHEBI:29105"/>
    </cofactor>
    <text evidence="2">Binds 2 Zn(2+) ions.</text>
</comment>
<comment type="cofactor">
    <cofactor evidence="1">
        <name>Ca(2+)</name>
        <dbReference type="ChEBI" id="CHEBI:29108"/>
    </cofactor>
</comment>
<comment type="activity regulation">
    <text evidence="3">Phosphatase activity is specifically inhibited by 5-((5-chloro-2-methoxyphenyl)sulfonamido)nicotinamide (SBI-425).</text>
</comment>
<comment type="subunit">
    <text evidence="1">Homodimer.</text>
</comment>
<comment type="subcellular location">
    <subcellularLocation>
        <location evidence="6">Cell membrane</location>
        <topology evidence="6">Lipid-anchor</topology>
        <topology evidence="6">GPI-anchor</topology>
    </subcellularLocation>
    <subcellularLocation>
        <location evidence="3">Extracellular vesicle membrane</location>
        <topology evidence="3">Lipid-anchor</topology>
        <topology evidence="3">GPI-anchor</topology>
    </subcellularLocation>
    <subcellularLocation>
        <location evidence="3">Mitochondrion membrane</location>
        <topology evidence="3">Lipid-anchor</topology>
        <topology evidence="3">GPI-anchor</topology>
    </subcellularLocation>
    <subcellularLocation>
        <location evidence="3">Mitochondrion intermembrane space</location>
    </subcellularLocation>
    <text evidence="3">Localizes to special class of extracellular vesicles, named matrix vesicles (MVs), which are released by osteogenic cells. Localizes to the mitochondria of thermogenic fat cells: tethered to mitochondrial membranes via a GPI-anchor and probably resides in the mitochondrion intermembrane space.</text>
</comment>
<comment type="domain">
    <text evidence="1">Calcium-binding is structural and does not influence the alkaline phosphatase activity. At very high concentrations, calcium can however substitute for zinc at zinc-binding sites, leading to strongly reduced enzyme activity.</text>
</comment>
<comment type="PTM">
    <text evidence="1">N-glycosylated.</text>
</comment>
<comment type="similarity">
    <text evidence="8">Belongs to the alkaline phosphatase family.</text>
</comment>
<dbReference type="EC" id="3.1.3.1" evidence="6"/>
<dbReference type="EC" id="3.9.1.1" evidence="3"/>
<dbReference type="EMBL" id="U31569">
    <property type="protein sequence ID" value="AAA82993.1"/>
    <property type="molecule type" value="mRNA"/>
</dbReference>
<dbReference type="PIR" id="S66467">
    <property type="entry name" value="S66467"/>
</dbReference>
<dbReference type="RefSeq" id="NP_001036028.1">
    <property type="nucleotide sequence ID" value="NM_001042563.1"/>
</dbReference>
<dbReference type="SMR" id="Q29486"/>
<dbReference type="STRING" id="9685.ENSFCAP00000002729"/>
<dbReference type="GlyCosmos" id="Q29486">
    <property type="glycosylation" value="5 sites, No reported glycans"/>
</dbReference>
<dbReference type="PaxDb" id="9685-ENSFCAP00000002729"/>
<dbReference type="GeneID" id="727689"/>
<dbReference type="KEGG" id="fca:727689"/>
<dbReference type="CTD" id="249"/>
<dbReference type="eggNOG" id="KOG4126">
    <property type="taxonomic scope" value="Eukaryota"/>
</dbReference>
<dbReference type="InParanoid" id="Q29486"/>
<dbReference type="OrthoDB" id="5818554at2759"/>
<dbReference type="TreeFam" id="TF323513"/>
<dbReference type="Proteomes" id="UP000011712">
    <property type="component" value="Unplaced"/>
</dbReference>
<dbReference type="GO" id="GO:0005758">
    <property type="term" value="C:mitochondrial intermembrane space"/>
    <property type="evidence" value="ECO:0000250"/>
    <property type="project" value="UniProtKB"/>
</dbReference>
<dbReference type="GO" id="GO:0031966">
    <property type="term" value="C:mitochondrial membrane"/>
    <property type="evidence" value="ECO:0000250"/>
    <property type="project" value="UniProtKB"/>
</dbReference>
<dbReference type="GO" id="GO:0005886">
    <property type="term" value="C:plasma membrane"/>
    <property type="evidence" value="ECO:0000314"/>
    <property type="project" value="UniProtKB"/>
</dbReference>
<dbReference type="GO" id="GO:0098552">
    <property type="term" value="C:side of membrane"/>
    <property type="evidence" value="ECO:0007669"/>
    <property type="project" value="UniProtKB-KW"/>
</dbReference>
<dbReference type="GO" id="GO:0043262">
    <property type="term" value="F:ADP phosphatase activity"/>
    <property type="evidence" value="ECO:0007669"/>
    <property type="project" value="RHEA"/>
</dbReference>
<dbReference type="GO" id="GO:0004035">
    <property type="term" value="F:alkaline phosphatase activity"/>
    <property type="evidence" value="ECO:0000314"/>
    <property type="project" value="UniProtKB"/>
</dbReference>
<dbReference type="GO" id="GO:0016887">
    <property type="term" value="F:ATP hydrolysis activity"/>
    <property type="evidence" value="ECO:0007669"/>
    <property type="project" value="RHEA"/>
</dbReference>
<dbReference type="GO" id="GO:0005509">
    <property type="term" value="F:calcium ion binding"/>
    <property type="evidence" value="ECO:0000250"/>
    <property type="project" value="UniProtKB"/>
</dbReference>
<dbReference type="GO" id="GO:0004427">
    <property type="term" value="F:inorganic diphosphate phosphatase activity"/>
    <property type="evidence" value="ECO:0007669"/>
    <property type="project" value="RHEA"/>
</dbReference>
<dbReference type="GO" id="GO:0050187">
    <property type="term" value="F:phosphoamidase activity"/>
    <property type="evidence" value="ECO:0000250"/>
    <property type="project" value="UniProtKB"/>
</dbReference>
<dbReference type="GO" id="GO:0052732">
    <property type="term" value="F:phosphoethanolamine phosphatase activity"/>
    <property type="evidence" value="ECO:0007669"/>
    <property type="project" value="RHEA"/>
</dbReference>
<dbReference type="GO" id="GO:0033883">
    <property type="term" value="F:pyridoxal phosphatase activity"/>
    <property type="evidence" value="ECO:0000250"/>
    <property type="project" value="UniProtKB"/>
</dbReference>
<dbReference type="GO" id="GO:0016462">
    <property type="term" value="F:pyrophosphatase activity"/>
    <property type="evidence" value="ECO:0000250"/>
    <property type="project" value="UniProtKB"/>
</dbReference>
<dbReference type="GO" id="GO:0031214">
    <property type="term" value="P:biomineral tissue development"/>
    <property type="evidence" value="ECO:0000318"/>
    <property type="project" value="GO_Central"/>
</dbReference>
<dbReference type="GO" id="GO:0030282">
    <property type="term" value="P:bone mineralization"/>
    <property type="evidence" value="ECO:0000250"/>
    <property type="project" value="UniProtKB"/>
</dbReference>
<dbReference type="GO" id="GO:0016311">
    <property type="term" value="P:dephosphorylation"/>
    <property type="evidence" value="ECO:0000314"/>
    <property type="project" value="UniProtKB"/>
</dbReference>
<dbReference type="GO" id="GO:0120162">
    <property type="term" value="P:positive regulation of cold-induced thermogenesis"/>
    <property type="evidence" value="ECO:0000250"/>
    <property type="project" value="UniProtKB"/>
</dbReference>
<dbReference type="CDD" id="cd16012">
    <property type="entry name" value="ALP"/>
    <property type="match status" value="1"/>
</dbReference>
<dbReference type="FunFam" id="3.40.720.10:FF:000008">
    <property type="entry name" value="Alkaline phosphatase"/>
    <property type="match status" value="1"/>
</dbReference>
<dbReference type="Gene3D" id="3.40.720.10">
    <property type="entry name" value="Alkaline Phosphatase, subunit A"/>
    <property type="match status" value="1"/>
</dbReference>
<dbReference type="InterPro" id="IPR001952">
    <property type="entry name" value="Alkaline_phosphatase"/>
</dbReference>
<dbReference type="InterPro" id="IPR018299">
    <property type="entry name" value="Alkaline_phosphatase_AS"/>
</dbReference>
<dbReference type="InterPro" id="IPR017850">
    <property type="entry name" value="Alkaline_phosphatase_core_sf"/>
</dbReference>
<dbReference type="PANTHER" id="PTHR11596">
    <property type="entry name" value="ALKALINE PHOSPHATASE"/>
    <property type="match status" value="1"/>
</dbReference>
<dbReference type="PANTHER" id="PTHR11596:SF74">
    <property type="entry name" value="ALKALINE PHOSPHATASE, TISSUE-NONSPECIFIC ISOZYME"/>
    <property type="match status" value="1"/>
</dbReference>
<dbReference type="Pfam" id="PF00245">
    <property type="entry name" value="Alk_phosphatase"/>
    <property type="match status" value="1"/>
</dbReference>
<dbReference type="PRINTS" id="PR00113">
    <property type="entry name" value="ALKPHPHTASE"/>
</dbReference>
<dbReference type="SMART" id="SM00098">
    <property type="entry name" value="alkPPc"/>
    <property type="match status" value="1"/>
</dbReference>
<dbReference type="SUPFAM" id="SSF53649">
    <property type="entry name" value="Alkaline phosphatase-like"/>
    <property type="match status" value="1"/>
</dbReference>
<dbReference type="PROSITE" id="PS00123">
    <property type="entry name" value="ALKALINE_PHOSPHATASE"/>
    <property type="match status" value="1"/>
</dbReference>
<gene>
    <name type="primary">ALPL</name>
</gene>
<sequence>MISPFLVLAIGTCLTNSLVPEKEKDPKYWRDQAQQTLKNALRLQKLNTNVVKNVIMFLGDGMGVSTVTAARILKGQLHHNPGEETRLEMDKFPYVALSKTYNTNAQVPDSAGTATAYLCGVKANEGTVGVSAATQRTQCNTTQGNEVTSILRWAKDSGKSVGIVTTTRVNHATPSAAYAHSADRDWYSDNEMPPEALSQGCKDIAYQLMHNVRDIEVIMGGGRKYMFPKNRTDVEYEMDEKARGTRLDGLNLVDIWKSFKPRHKHSHYVWNRTELLTLDPYGVDYLLGLFEPGDMQYELNRNSTTDPSLSEMVEIAIKILSKNPKGFFLLVEGGRIDHGHHEGKAKQALHEAVEMDQAIGRAGAMTSVEDTLTIVTADHSHVFTFGGYTPRGNSIFGLAPMVSDTDKKPFTSILYGNGPGYKVVGGERENVSMVDYAHNNYQAQSAVPLRHETHGGEDVAVFAKGPMAHLLHGVHEQNYIPHVMAYAACIGANLDHCASASSAGGPSPGPLFLLLALPSLGILF</sequence>
<keyword id="KW-0091">Biomineralization</keyword>
<keyword id="KW-0106">Calcium</keyword>
<keyword id="KW-1003">Cell membrane</keyword>
<keyword id="KW-0903">Direct protein sequencing</keyword>
<keyword id="KW-1015">Disulfide bond</keyword>
<keyword id="KW-0325">Glycoprotein</keyword>
<keyword id="KW-0336">GPI-anchor</keyword>
<keyword id="KW-0378">Hydrolase</keyword>
<keyword id="KW-0449">Lipoprotein</keyword>
<keyword id="KW-0460">Magnesium</keyword>
<keyword id="KW-0472">Membrane</keyword>
<keyword id="KW-0479">Metal-binding</keyword>
<keyword id="KW-0496">Mitochondrion</keyword>
<keyword id="KW-0597">Phosphoprotein</keyword>
<keyword id="KW-1185">Reference proteome</keyword>
<keyword id="KW-0732">Signal</keyword>
<keyword id="KW-0862">Zinc</keyword>
<reference key="1">
    <citation type="journal article" date="1995" name="Arch. Biochem. Biophys.">
        <title>cDNA encoding a functional feline liver/bone/kidney-type alkaline phosphatase.</title>
        <authorList>
            <person name="Ghosh A.K."/>
            <person name="Mullins J.I."/>
        </authorList>
    </citation>
    <scope>NUCLEOTIDE SEQUENCE [MRNA]</scope>
    <scope>PARTIAL PROTEIN SEQUENCE</scope>
    <scope>CATALYTIC ACTIVITY</scope>
    <scope>SUBCELLULAR LOCATION</scope>
</reference>
<proteinExistence type="evidence at protein level"/>
<accession>Q29486</accession>